<dbReference type="GO" id="GO:0005576">
    <property type="term" value="C:extracellular region"/>
    <property type="evidence" value="ECO:0007669"/>
    <property type="project" value="UniProtKB-SubCell"/>
</dbReference>
<dbReference type="GO" id="GO:0007218">
    <property type="term" value="P:neuropeptide signaling pathway"/>
    <property type="evidence" value="ECO:0007669"/>
    <property type="project" value="UniProtKB-KW"/>
</dbReference>
<dbReference type="InterPro" id="IPR013231">
    <property type="entry name" value="Periviscerokinin"/>
</dbReference>
<dbReference type="Pfam" id="PF08259">
    <property type="entry name" value="Periviscerokin"/>
    <property type="match status" value="1"/>
</dbReference>
<evidence type="ECO:0000255" key="1"/>
<evidence type="ECO:0000269" key="2">
    <source>
    </source>
</evidence>
<evidence type="ECO:0000303" key="3">
    <source>
    </source>
</evidence>
<evidence type="ECO:0000305" key="4"/>
<organism>
    <name type="scientific">Perisphaeria aff. bicolor (strain BF-2008)</name>
    <name type="common">Cockroach</name>
    <dbReference type="NCBI Taxonomy" id="521515"/>
    <lineage>
        <taxon>Eukaryota</taxon>
        <taxon>Metazoa</taxon>
        <taxon>Ecdysozoa</taxon>
        <taxon>Arthropoda</taxon>
        <taxon>Hexapoda</taxon>
        <taxon>Insecta</taxon>
        <taxon>Pterygota</taxon>
        <taxon>Neoptera</taxon>
        <taxon>Polyneoptera</taxon>
        <taxon>Dictyoptera</taxon>
        <taxon>Blattodea</taxon>
        <taxon>Blaberoidea</taxon>
        <taxon>Blaberidae</taxon>
        <taxon>Perisphaerinae</taxon>
        <taxon>Perisphaeria</taxon>
    </lineage>
</organism>
<reference evidence="4" key="1">
    <citation type="journal article" date="2009" name="BMC Evol. Biol.">
        <title>A proteomic approach for studying insect phylogeny: CAPA peptides of ancient insect taxa (Dictyoptera, Blattoptera) as a test case.</title>
        <authorList>
            <person name="Roth S."/>
            <person name="Fromm B."/>
            <person name="Gaede G."/>
            <person name="Predel R."/>
        </authorList>
    </citation>
    <scope>PROTEIN SEQUENCE</scope>
    <scope>AMIDATION AT VAL-11</scope>
    <source>
        <tissue evidence="2">Abdominal perisympathetic organs</tissue>
    </source>
</reference>
<protein>
    <recommendedName>
        <fullName evidence="3">Periviscerokinin-3</fullName>
        <shortName evidence="3">PerBi-PVK-3</shortName>
    </recommendedName>
</protein>
<comment type="function">
    <text evidence="4">Mediates visceral muscle contractile activity (myotropic activity).</text>
</comment>
<comment type="subcellular location">
    <subcellularLocation>
        <location evidence="4">Secreted</location>
    </subcellularLocation>
</comment>
<comment type="similarity">
    <text evidence="1">Belongs to the periviscerokinin family.</text>
</comment>
<accession>P85707</accession>
<keyword id="KW-0027">Amidation</keyword>
<keyword id="KW-0903">Direct protein sequencing</keyword>
<keyword id="KW-0527">Neuropeptide</keyword>
<keyword id="KW-0964">Secreted</keyword>
<proteinExistence type="evidence at protein level"/>
<name>PVK3_PERBB</name>
<sequence length="11" mass="1147">GSSGMIPFPRV</sequence>
<feature type="peptide" id="PRO_0000378845" description="Periviscerokinin-3" evidence="2">
    <location>
        <begin position="1"/>
        <end position="11"/>
    </location>
</feature>
<feature type="modified residue" description="Valine amide" evidence="2">
    <location>
        <position position="11"/>
    </location>
</feature>